<accession>P0ABW3</accession>
<accession>P37910</accession>
<accession>P77220</accession>
<reference key="1">
    <citation type="journal article" date="1984" name="Proc. Natl. Acad. Sci. U.S.A.">
        <title>Primary structure of the Escherichia coli ribonucleoside diphosphate reductase operon.</title>
        <authorList>
            <person name="Carlson J."/>
            <person name="Fuchs J.A."/>
            <person name="Messing J."/>
        </authorList>
    </citation>
    <scope>NUCLEOTIDE SEQUENCE [GENOMIC DNA]</scope>
</reference>
<reference key="2">
    <citation type="journal article" date="1997" name="DNA Res.">
        <title>Construction of a contiguous 874-kb sequence of the Escherichia coli-K12 genome corresponding to 50.0-68.8 min on the linkage map and analysis of its sequence features.</title>
        <authorList>
            <person name="Yamamoto Y."/>
            <person name="Aiba H."/>
            <person name="Baba T."/>
            <person name="Hayashi K."/>
            <person name="Inada T."/>
            <person name="Isono K."/>
            <person name="Itoh T."/>
            <person name="Kimura S."/>
            <person name="Kitagawa M."/>
            <person name="Makino K."/>
            <person name="Miki T."/>
            <person name="Mitsuhashi N."/>
            <person name="Mizobuchi K."/>
            <person name="Mori H."/>
            <person name="Nakade S."/>
            <person name="Nakamura Y."/>
            <person name="Nashimoto H."/>
            <person name="Oshima T."/>
            <person name="Oyama S."/>
            <person name="Saito N."/>
            <person name="Sampei G."/>
            <person name="Satoh Y."/>
            <person name="Sivasundaram S."/>
            <person name="Tagami H."/>
            <person name="Takahashi H."/>
            <person name="Takeda J."/>
            <person name="Takemoto K."/>
            <person name="Uehara K."/>
            <person name="Wada C."/>
            <person name="Yamagata S."/>
            <person name="Horiuchi T."/>
        </authorList>
    </citation>
    <scope>NUCLEOTIDE SEQUENCE [LARGE SCALE GENOMIC DNA]</scope>
    <source>
        <strain>K12 / W3110 / ATCC 27325 / DSM 5911</strain>
    </source>
</reference>
<reference key="3">
    <citation type="journal article" date="1997" name="Science">
        <title>The complete genome sequence of Escherichia coli K-12.</title>
        <authorList>
            <person name="Blattner F.R."/>
            <person name="Plunkett G. III"/>
            <person name="Bloch C.A."/>
            <person name="Perna N.T."/>
            <person name="Burland V."/>
            <person name="Riley M."/>
            <person name="Collado-Vides J."/>
            <person name="Glasner J.D."/>
            <person name="Rode C.K."/>
            <person name="Mayhew G.F."/>
            <person name="Gregor J."/>
            <person name="Davis N.W."/>
            <person name="Kirkpatrick H.A."/>
            <person name="Goeden M.A."/>
            <person name="Rose D.J."/>
            <person name="Mau B."/>
            <person name="Shao Y."/>
        </authorList>
    </citation>
    <scope>NUCLEOTIDE SEQUENCE [LARGE SCALE GENOMIC DNA]</scope>
    <source>
        <strain>K12 / MG1655 / ATCC 47076</strain>
    </source>
</reference>
<reference key="4">
    <citation type="journal article" date="2006" name="Mol. Syst. Biol.">
        <title>Highly accurate genome sequences of Escherichia coli K-12 strains MG1655 and W3110.</title>
        <authorList>
            <person name="Hayashi K."/>
            <person name="Morooka N."/>
            <person name="Yamamoto Y."/>
            <person name="Fujita K."/>
            <person name="Isono K."/>
            <person name="Choi S."/>
            <person name="Ohtsubo E."/>
            <person name="Baba T."/>
            <person name="Wanner B.L."/>
            <person name="Mori H."/>
            <person name="Horiuchi T."/>
        </authorList>
    </citation>
    <scope>NUCLEOTIDE SEQUENCE [LARGE SCALE GENOMIC DNA]</scope>
    <source>
        <strain>K12 / W3110 / ATCC 27325 / DSM 5911</strain>
    </source>
</reference>
<reference key="5">
    <citation type="journal article" date="1994" name="Nucleic Acids Res.">
        <title>Intrinsic and extrinsic approaches for detecting genes in a bacterial genome.</title>
        <authorList>
            <person name="Borodovsky M."/>
            <person name="Rudd K.E."/>
            <person name="Koonin E.V."/>
        </authorList>
    </citation>
    <scope>IDENTIFICATION</scope>
</reference>
<protein>
    <recommendedName>
        <fullName>Uncharacterized ferredoxin-like protein YfaE</fullName>
    </recommendedName>
</protein>
<evidence type="ECO:0000255" key="1">
    <source>
        <dbReference type="PROSITE-ProRule" id="PRU00465"/>
    </source>
</evidence>
<evidence type="ECO:0000305" key="2"/>
<dbReference type="EMBL" id="K02672">
    <property type="status" value="NOT_ANNOTATED_CDS"/>
    <property type="molecule type" value="Genomic_DNA"/>
</dbReference>
<dbReference type="EMBL" id="U00096">
    <property type="protein sequence ID" value="AAC75296.1"/>
    <property type="molecule type" value="Genomic_DNA"/>
</dbReference>
<dbReference type="EMBL" id="AP009048">
    <property type="protein sequence ID" value="BAA16055.1"/>
    <property type="molecule type" value="Genomic_DNA"/>
</dbReference>
<dbReference type="PIR" id="B64994">
    <property type="entry name" value="B64994"/>
</dbReference>
<dbReference type="RefSeq" id="NP_416739.1">
    <property type="nucleotide sequence ID" value="NC_000913.3"/>
</dbReference>
<dbReference type="RefSeq" id="WP_000135040.1">
    <property type="nucleotide sequence ID" value="NZ_STEB01000002.1"/>
</dbReference>
<dbReference type="SMR" id="P0ABW3"/>
<dbReference type="BioGRID" id="4260493">
    <property type="interactions" value="174"/>
</dbReference>
<dbReference type="FunCoup" id="P0ABW3">
    <property type="interactions" value="31"/>
</dbReference>
<dbReference type="STRING" id="511145.b2236"/>
<dbReference type="PaxDb" id="511145-b2236"/>
<dbReference type="EnsemblBacteria" id="AAC75296">
    <property type="protein sequence ID" value="AAC75296"/>
    <property type="gene ID" value="b2236"/>
</dbReference>
<dbReference type="GeneID" id="93774939"/>
<dbReference type="GeneID" id="946729"/>
<dbReference type="KEGG" id="ecj:JW2230"/>
<dbReference type="KEGG" id="eco:b2236"/>
<dbReference type="KEGG" id="ecoc:C3026_12495"/>
<dbReference type="PATRIC" id="fig|511145.12.peg.2325"/>
<dbReference type="EchoBASE" id="EB2263"/>
<dbReference type="eggNOG" id="COG1018">
    <property type="taxonomic scope" value="Bacteria"/>
</dbReference>
<dbReference type="HOGENOM" id="CLU_082632_6_1_6"/>
<dbReference type="InParanoid" id="P0ABW3"/>
<dbReference type="OMA" id="PCICKAK"/>
<dbReference type="OrthoDB" id="9806195at2"/>
<dbReference type="PhylomeDB" id="P0ABW3"/>
<dbReference type="BioCyc" id="EcoCyc:EG12360-MONOMER"/>
<dbReference type="PRO" id="PR:P0ABW3"/>
<dbReference type="Proteomes" id="UP000000625">
    <property type="component" value="Chromosome"/>
</dbReference>
<dbReference type="GO" id="GO:0005737">
    <property type="term" value="C:cytoplasm"/>
    <property type="evidence" value="ECO:0000314"/>
    <property type="project" value="EcoliWiki"/>
</dbReference>
<dbReference type="GO" id="GO:0051537">
    <property type="term" value="F:2 iron, 2 sulfur cluster binding"/>
    <property type="evidence" value="ECO:0000314"/>
    <property type="project" value="EcoCyc"/>
</dbReference>
<dbReference type="GO" id="GO:0009055">
    <property type="term" value="F:electron transfer activity"/>
    <property type="evidence" value="ECO:0000314"/>
    <property type="project" value="EcoliWiki"/>
</dbReference>
<dbReference type="GO" id="GO:0046872">
    <property type="term" value="F:metal ion binding"/>
    <property type="evidence" value="ECO:0007669"/>
    <property type="project" value="UniProtKB-KW"/>
</dbReference>
<dbReference type="GO" id="GO:0006124">
    <property type="term" value="P:ferredoxin metabolic process"/>
    <property type="evidence" value="ECO:0000314"/>
    <property type="project" value="EcoliWiki"/>
</dbReference>
<dbReference type="GO" id="GO:0030091">
    <property type="term" value="P:protein repair"/>
    <property type="evidence" value="ECO:0000314"/>
    <property type="project" value="EcoCyc"/>
</dbReference>
<dbReference type="CDD" id="cd00207">
    <property type="entry name" value="fer2"/>
    <property type="match status" value="1"/>
</dbReference>
<dbReference type="FunFam" id="3.10.20.30:FF:000011">
    <property type="entry name" value="2Fe-2S ferredoxin YfaE"/>
    <property type="match status" value="1"/>
</dbReference>
<dbReference type="Gene3D" id="3.10.20.30">
    <property type="match status" value="1"/>
</dbReference>
<dbReference type="InterPro" id="IPR036010">
    <property type="entry name" value="2Fe-2S_ferredoxin-like_sf"/>
</dbReference>
<dbReference type="InterPro" id="IPR001041">
    <property type="entry name" value="2Fe-2S_ferredoxin-type"/>
</dbReference>
<dbReference type="InterPro" id="IPR006058">
    <property type="entry name" value="2Fe2S_fd_BS"/>
</dbReference>
<dbReference type="InterPro" id="IPR012675">
    <property type="entry name" value="Beta-grasp_dom_sf"/>
</dbReference>
<dbReference type="NCBIfam" id="NF007985">
    <property type="entry name" value="PRK10713.1"/>
    <property type="match status" value="1"/>
</dbReference>
<dbReference type="Pfam" id="PF00111">
    <property type="entry name" value="Fer2"/>
    <property type="match status" value="1"/>
</dbReference>
<dbReference type="SUPFAM" id="SSF54292">
    <property type="entry name" value="2Fe-2S ferredoxin-like"/>
    <property type="match status" value="1"/>
</dbReference>
<dbReference type="PROSITE" id="PS00197">
    <property type="entry name" value="2FE2S_FER_1"/>
    <property type="match status" value="1"/>
</dbReference>
<dbReference type="PROSITE" id="PS51085">
    <property type="entry name" value="2FE2S_FER_2"/>
    <property type="match status" value="1"/>
</dbReference>
<name>YFAE_ECOLI</name>
<feature type="chain" id="PRO_0000189416" description="Uncharacterized ferredoxin-like protein YfaE">
    <location>
        <begin position="1"/>
        <end position="84"/>
    </location>
</feature>
<feature type="domain" description="2Fe-2S ferredoxin-type" evidence="1">
    <location>
        <begin position="2"/>
        <end position="84"/>
    </location>
</feature>
<feature type="binding site" evidence="1">
    <location>
        <position position="37"/>
    </location>
    <ligand>
        <name>[2Fe-2S] cluster</name>
        <dbReference type="ChEBI" id="CHEBI:190135"/>
    </ligand>
</feature>
<feature type="binding site" evidence="1">
    <location>
        <position position="42"/>
    </location>
    <ligand>
        <name>[2Fe-2S] cluster</name>
        <dbReference type="ChEBI" id="CHEBI:190135"/>
    </ligand>
</feature>
<feature type="binding site" evidence="1">
    <location>
        <position position="45"/>
    </location>
    <ligand>
        <name>[2Fe-2S] cluster</name>
        <dbReference type="ChEBI" id="CHEBI:190135"/>
    </ligand>
</feature>
<feature type="binding site" evidence="1">
    <location>
        <position position="74"/>
    </location>
    <ligand>
        <name>[2Fe-2S] cluster</name>
        <dbReference type="ChEBI" id="CHEBI:190135"/>
    </ligand>
</feature>
<gene>
    <name type="primary">yfaE</name>
    <name type="ordered locus">b2236</name>
    <name type="ordered locus">JW2230</name>
</gene>
<keyword id="KW-0001">2Fe-2S</keyword>
<keyword id="KW-0249">Electron transport</keyword>
<keyword id="KW-0408">Iron</keyword>
<keyword id="KW-0411">Iron-sulfur</keyword>
<keyword id="KW-0479">Metal-binding</keyword>
<keyword id="KW-1185">Reference proteome</keyword>
<keyword id="KW-0813">Transport</keyword>
<comment type="cofactor">
    <cofactor evidence="2">
        <name>[2Fe-2S] cluster</name>
        <dbReference type="ChEBI" id="CHEBI:190135"/>
    </cofactor>
    <text evidence="2">Binds 1 [2Fe-2S] cluster.</text>
</comment>
<comment type="sequence caution" evidence="2">
    <conflict type="frameshift">
        <sequence resource="EMBL" id="K02672"/>
    </conflict>
</comment>
<sequence length="84" mass="9293">MARVTLRITGTQLLCQDEHPSLLAALESHNVAVEYQCREGYCGSCRTRLVAGQVDWIAEPLAFIQPGEILPCCCRAKGDIEIEM</sequence>
<proteinExistence type="predicted"/>
<organism>
    <name type="scientific">Escherichia coli (strain K12)</name>
    <dbReference type="NCBI Taxonomy" id="83333"/>
    <lineage>
        <taxon>Bacteria</taxon>
        <taxon>Pseudomonadati</taxon>
        <taxon>Pseudomonadota</taxon>
        <taxon>Gammaproteobacteria</taxon>
        <taxon>Enterobacterales</taxon>
        <taxon>Enterobacteriaceae</taxon>
        <taxon>Escherichia</taxon>
    </lineage>
</organism>